<evidence type="ECO:0000255" key="1">
    <source>
        <dbReference type="HAMAP-Rule" id="MF_01014"/>
    </source>
</evidence>
<accession>A1SVD0</accession>
<dbReference type="EC" id="5.3.1.16" evidence="1"/>
<dbReference type="EMBL" id="CP000510">
    <property type="protein sequence ID" value="ABM03445.1"/>
    <property type="molecule type" value="Genomic_DNA"/>
</dbReference>
<dbReference type="RefSeq" id="WP_011770005.1">
    <property type="nucleotide sequence ID" value="NC_008709.1"/>
</dbReference>
<dbReference type="SMR" id="A1SVD0"/>
<dbReference type="STRING" id="357804.Ping_1652"/>
<dbReference type="KEGG" id="pin:Ping_1652"/>
<dbReference type="eggNOG" id="COG0106">
    <property type="taxonomic scope" value="Bacteria"/>
</dbReference>
<dbReference type="HOGENOM" id="CLU_048577_1_2_6"/>
<dbReference type="OrthoDB" id="9807749at2"/>
<dbReference type="UniPathway" id="UPA00031">
    <property type="reaction ID" value="UER00009"/>
</dbReference>
<dbReference type="Proteomes" id="UP000000639">
    <property type="component" value="Chromosome"/>
</dbReference>
<dbReference type="GO" id="GO:0005737">
    <property type="term" value="C:cytoplasm"/>
    <property type="evidence" value="ECO:0007669"/>
    <property type="project" value="UniProtKB-SubCell"/>
</dbReference>
<dbReference type="GO" id="GO:0003949">
    <property type="term" value="F:1-(5-phosphoribosyl)-5-[(5-phosphoribosylamino)methylideneamino]imidazole-4-carboxamide isomerase activity"/>
    <property type="evidence" value="ECO:0007669"/>
    <property type="project" value="UniProtKB-UniRule"/>
</dbReference>
<dbReference type="GO" id="GO:0000105">
    <property type="term" value="P:L-histidine biosynthetic process"/>
    <property type="evidence" value="ECO:0007669"/>
    <property type="project" value="UniProtKB-UniRule"/>
</dbReference>
<dbReference type="GO" id="GO:0000162">
    <property type="term" value="P:L-tryptophan biosynthetic process"/>
    <property type="evidence" value="ECO:0007669"/>
    <property type="project" value="TreeGrafter"/>
</dbReference>
<dbReference type="CDD" id="cd04732">
    <property type="entry name" value="HisA"/>
    <property type="match status" value="1"/>
</dbReference>
<dbReference type="FunFam" id="3.20.20.70:FF:000009">
    <property type="entry name" value="1-(5-phosphoribosyl)-5-[(5-phosphoribosylamino)methylideneamino] imidazole-4-carboxamide isomerase"/>
    <property type="match status" value="1"/>
</dbReference>
<dbReference type="Gene3D" id="3.20.20.70">
    <property type="entry name" value="Aldolase class I"/>
    <property type="match status" value="1"/>
</dbReference>
<dbReference type="HAMAP" id="MF_01014">
    <property type="entry name" value="HisA"/>
    <property type="match status" value="1"/>
</dbReference>
<dbReference type="InterPro" id="IPR013785">
    <property type="entry name" value="Aldolase_TIM"/>
</dbReference>
<dbReference type="InterPro" id="IPR006062">
    <property type="entry name" value="His_biosynth"/>
</dbReference>
<dbReference type="InterPro" id="IPR006063">
    <property type="entry name" value="HisA_bact_arch"/>
</dbReference>
<dbReference type="InterPro" id="IPR044524">
    <property type="entry name" value="Isoase_HisA-like"/>
</dbReference>
<dbReference type="InterPro" id="IPR023016">
    <property type="entry name" value="Isoase_HisA-like_bact"/>
</dbReference>
<dbReference type="InterPro" id="IPR011060">
    <property type="entry name" value="RibuloseP-bd_barrel"/>
</dbReference>
<dbReference type="NCBIfam" id="TIGR00007">
    <property type="entry name" value="1-(5-phosphoribosyl)-5-[(5-phosphoribosylamino)methylideneamino]imidazole-4-carboxamide isomerase"/>
    <property type="match status" value="1"/>
</dbReference>
<dbReference type="PANTHER" id="PTHR43090">
    <property type="entry name" value="1-(5-PHOSPHORIBOSYL)-5-[(5-PHOSPHORIBOSYLAMINO)METHYLIDENEAMINO] IMIDAZOLE-4-CARBOXAMIDE ISOMERASE"/>
    <property type="match status" value="1"/>
</dbReference>
<dbReference type="PANTHER" id="PTHR43090:SF2">
    <property type="entry name" value="1-(5-PHOSPHORIBOSYL)-5-[(5-PHOSPHORIBOSYLAMINO)METHYLIDENEAMINO] IMIDAZOLE-4-CARBOXAMIDE ISOMERASE"/>
    <property type="match status" value="1"/>
</dbReference>
<dbReference type="Pfam" id="PF00977">
    <property type="entry name" value="His_biosynth"/>
    <property type="match status" value="1"/>
</dbReference>
<dbReference type="SUPFAM" id="SSF51366">
    <property type="entry name" value="Ribulose-phoshate binding barrel"/>
    <property type="match status" value="1"/>
</dbReference>
<gene>
    <name evidence="1" type="primary">hisA</name>
    <name type="ordered locus">Ping_1652</name>
</gene>
<organism>
    <name type="scientific">Psychromonas ingrahamii (strain DSM 17664 / CCUG 51855 / 37)</name>
    <dbReference type="NCBI Taxonomy" id="357804"/>
    <lineage>
        <taxon>Bacteria</taxon>
        <taxon>Pseudomonadati</taxon>
        <taxon>Pseudomonadota</taxon>
        <taxon>Gammaproteobacteria</taxon>
        <taxon>Alteromonadales</taxon>
        <taxon>Psychromonadaceae</taxon>
        <taxon>Psychromonas</taxon>
    </lineage>
</organism>
<comment type="catalytic activity">
    <reaction evidence="1">
        <text>1-(5-phospho-beta-D-ribosyl)-5-[(5-phospho-beta-D-ribosylamino)methylideneamino]imidazole-4-carboxamide = 5-[(5-phospho-1-deoxy-D-ribulos-1-ylimino)methylamino]-1-(5-phospho-beta-D-ribosyl)imidazole-4-carboxamide</text>
        <dbReference type="Rhea" id="RHEA:15469"/>
        <dbReference type="ChEBI" id="CHEBI:58435"/>
        <dbReference type="ChEBI" id="CHEBI:58525"/>
        <dbReference type="EC" id="5.3.1.16"/>
    </reaction>
</comment>
<comment type="pathway">
    <text evidence="1">Amino-acid biosynthesis; L-histidine biosynthesis; L-histidine from 5-phospho-alpha-D-ribose 1-diphosphate: step 4/9.</text>
</comment>
<comment type="subcellular location">
    <subcellularLocation>
        <location evidence="1">Cytoplasm</location>
    </subcellularLocation>
</comment>
<comment type="similarity">
    <text evidence="1">Belongs to the HisA/HisF family.</text>
</comment>
<sequence>MIIPALDLIDGKVVRLYQGDYAQKTVYSDSPQSQFTIYNQQGADWLHLVDLDGAKDVTKRQLKVIASLIANTPAKIQIGGGVRTEQDVQDLLDAGAQRVVIGSTAVKEPAMVAGWMKKYGAEHIVLALDINIDAQGNKIVAVSGWQEASGQTIESLLETYLAVGLKHVLCTDISKDGTLSGSNVSLYKEMAAAYPQVAWQASGGIGSLDDIAAVARSGASGMIVGRALLEGKFTVKEAIFCWENA</sequence>
<name>HIS4_PSYIN</name>
<reference key="1">
    <citation type="journal article" date="2008" name="BMC Genomics">
        <title>Genomics of an extreme psychrophile, Psychromonas ingrahamii.</title>
        <authorList>
            <person name="Riley M."/>
            <person name="Staley J.T."/>
            <person name="Danchin A."/>
            <person name="Wang T.Z."/>
            <person name="Brettin T.S."/>
            <person name="Hauser L.J."/>
            <person name="Land M.L."/>
            <person name="Thompson L.S."/>
        </authorList>
    </citation>
    <scope>NUCLEOTIDE SEQUENCE [LARGE SCALE GENOMIC DNA]</scope>
    <source>
        <strain>DSM 17664 / CCUG 51855 / 37</strain>
    </source>
</reference>
<protein>
    <recommendedName>
        <fullName evidence="1">1-(5-phosphoribosyl)-5-[(5-phosphoribosylamino)methylideneamino] imidazole-4-carboxamide isomerase</fullName>
        <ecNumber evidence="1">5.3.1.16</ecNumber>
    </recommendedName>
    <alternativeName>
        <fullName evidence="1">Phosphoribosylformimino-5-aminoimidazole carboxamide ribotide isomerase</fullName>
    </alternativeName>
</protein>
<proteinExistence type="inferred from homology"/>
<feature type="chain" id="PRO_0000290516" description="1-(5-phosphoribosyl)-5-[(5-phosphoribosylamino)methylideneamino] imidazole-4-carboxamide isomerase">
    <location>
        <begin position="1"/>
        <end position="245"/>
    </location>
</feature>
<feature type="active site" description="Proton acceptor" evidence="1">
    <location>
        <position position="7"/>
    </location>
</feature>
<feature type="active site" description="Proton donor" evidence="1">
    <location>
        <position position="129"/>
    </location>
</feature>
<keyword id="KW-0028">Amino-acid biosynthesis</keyword>
<keyword id="KW-0963">Cytoplasm</keyword>
<keyword id="KW-0368">Histidine biosynthesis</keyword>
<keyword id="KW-0413">Isomerase</keyword>
<keyword id="KW-1185">Reference proteome</keyword>